<proteinExistence type="inferred from homology"/>
<sequence>MDSHTLIQALIYLGSAALIVPIAVRLGLGSVLGYLIAGCIIGPWGLRLVTDAESILHFAEIGVVLMLFIIGLELDPQRLWKLRAAVFGGGALQMVICGGLLGLFCMLLGLRWQVAELIGMTLALSSTAIAMQAMNERNLMVTQMGRSAFAVLLFQDIAAIPLVAMIPLLATSSASTTMGAFALSALKVAGALVLVVLLGRYVTRPALRFVARSGLREVFSAVALFLVFGFGLLLEEVGLSMAMGAFLAGVLLASSEYRHALESDIEPFKGLLLGLFFIGVGMSIDFGTLLENPLRIVILLLGFLIIKIAMLWLIARPLQVPNKQRRWFAVLLGQGSEFAFVVFGAAQMANVLEPEWAKSLTLAVALSMAATPILLVILNRLEQSSTEEAREADEIDEEQPRVIIAGFGRFGQITGRLLLSSGVKMVVLDHDPDHIETLRKFGMKVFYGDATRMDLLESAGAAKAEVLINAIDDPQTNLQLTEMVKEHFPHLQIIARARDVDHYIRLRQAGVEKPERETFEGALKTGRLALESLGLGPYEARERADVFRRFNIQMVEEMAMVENDTKARAAVYKRTSAMLSEIITEDREHLSLIQRHGWQGTEEGKHTGNMADEPETKPSS</sequence>
<gene>
    <name evidence="1" type="primary">kefC</name>
    <name type="ordered locus">EcHS_A0053</name>
</gene>
<feature type="chain" id="PRO_1000087390" description="Glutathione-regulated potassium-efflux system protein KefC">
    <location>
        <begin position="1"/>
        <end position="620"/>
    </location>
</feature>
<feature type="transmembrane region" description="Helical" evidence="1">
    <location>
        <begin position="4"/>
        <end position="24"/>
    </location>
</feature>
<feature type="transmembrane region" description="Helical" evidence="1">
    <location>
        <begin position="26"/>
        <end position="46"/>
    </location>
</feature>
<feature type="transmembrane region" description="Helical" evidence="1">
    <location>
        <begin position="54"/>
        <end position="74"/>
    </location>
</feature>
<feature type="transmembrane region" description="Helical" evidence="1">
    <location>
        <begin position="90"/>
        <end position="110"/>
    </location>
</feature>
<feature type="transmembrane region" description="Helical" evidence="1">
    <location>
        <begin position="114"/>
        <end position="134"/>
    </location>
</feature>
<feature type="transmembrane region" description="Helical" evidence="1">
    <location>
        <begin position="149"/>
        <end position="169"/>
    </location>
</feature>
<feature type="transmembrane region" description="Helical" evidence="1">
    <location>
        <begin position="178"/>
        <end position="198"/>
    </location>
</feature>
<feature type="transmembrane region" description="Helical" evidence="1">
    <location>
        <begin position="218"/>
        <end position="238"/>
    </location>
</feature>
<feature type="transmembrane region" description="Helical" evidence="1">
    <location>
        <begin position="270"/>
        <end position="290"/>
    </location>
</feature>
<feature type="transmembrane region" description="Helical" evidence="1">
    <location>
        <begin position="294"/>
        <end position="314"/>
    </location>
</feature>
<feature type="transmembrane region" description="Helical" evidence="1">
    <location>
        <begin position="327"/>
        <end position="347"/>
    </location>
</feature>
<feature type="transmembrane region" description="Helical" evidence="1">
    <location>
        <begin position="359"/>
        <end position="379"/>
    </location>
</feature>
<feature type="domain" description="RCK N-terminal" evidence="2">
    <location>
        <begin position="399"/>
        <end position="518"/>
    </location>
</feature>
<feature type="region of interest" description="Disordered" evidence="3">
    <location>
        <begin position="597"/>
        <end position="620"/>
    </location>
</feature>
<evidence type="ECO:0000255" key="1">
    <source>
        <dbReference type="HAMAP-Rule" id="MF_01413"/>
    </source>
</evidence>
<evidence type="ECO:0000255" key="2">
    <source>
        <dbReference type="PROSITE-ProRule" id="PRU00543"/>
    </source>
</evidence>
<evidence type="ECO:0000256" key="3">
    <source>
        <dbReference type="SAM" id="MobiDB-lite"/>
    </source>
</evidence>
<comment type="function">
    <text evidence="1">Pore-forming subunit of a potassium efflux system that confers protection against electrophiles. Catalyzes K(+)/H(+) antiport.</text>
</comment>
<comment type="subunit">
    <text evidence="1">Homodimer. Interacts with the regulatory subunit KefF.</text>
</comment>
<comment type="subcellular location">
    <subcellularLocation>
        <location evidence="1">Cell inner membrane</location>
        <topology evidence="1">Multi-pass membrane protein</topology>
    </subcellularLocation>
</comment>
<comment type="similarity">
    <text evidence="1">Belongs to the monovalent cation:proton antiporter 2 (CPA2) transporter (TC 2.A.37) family. KefC subfamily.</text>
</comment>
<dbReference type="EMBL" id="CP000802">
    <property type="protein sequence ID" value="ABV04453.1"/>
    <property type="molecule type" value="Genomic_DNA"/>
</dbReference>
<dbReference type="RefSeq" id="WP_000377129.1">
    <property type="nucleotide sequence ID" value="NC_009800.1"/>
</dbReference>
<dbReference type="SMR" id="A7ZVZ9"/>
<dbReference type="KEGG" id="ecx:EcHS_A0053"/>
<dbReference type="HOGENOM" id="CLU_005126_9_3_6"/>
<dbReference type="GO" id="GO:0005886">
    <property type="term" value="C:plasma membrane"/>
    <property type="evidence" value="ECO:0007669"/>
    <property type="project" value="UniProtKB-SubCell"/>
</dbReference>
<dbReference type="GO" id="GO:0019899">
    <property type="term" value="F:enzyme binding"/>
    <property type="evidence" value="ECO:0007669"/>
    <property type="project" value="InterPro"/>
</dbReference>
<dbReference type="GO" id="GO:0015503">
    <property type="term" value="F:glutathione-regulated potassium exporter activity"/>
    <property type="evidence" value="ECO:0007669"/>
    <property type="project" value="UniProtKB-UniRule"/>
</dbReference>
<dbReference type="GO" id="GO:0015643">
    <property type="term" value="F:toxic substance binding"/>
    <property type="evidence" value="ECO:0007669"/>
    <property type="project" value="InterPro"/>
</dbReference>
<dbReference type="GO" id="GO:1902600">
    <property type="term" value="P:proton transmembrane transport"/>
    <property type="evidence" value="ECO:0007669"/>
    <property type="project" value="InterPro"/>
</dbReference>
<dbReference type="GO" id="GO:0051595">
    <property type="term" value="P:response to methylglyoxal"/>
    <property type="evidence" value="ECO:0007669"/>
    <property type="project" value="InterPro"/>
</dbReference>
<dbReference type="FunFam" id="1.20.1530.20:FF:000001">
    <property type="entry name" value="Glutathione-regulated potassium-efflux system protein KefB"/>
    <property type="match status" value="1"/>
</dbReference>
<dbReference type="FunFam" id="3.40.50.720:FF:000036">
    <property type="entry name" value="Glutathione-regulated potassium-efflux system protein KefB"/>
    <property type="match status" value="1"/>
</dbReference>
<dbReference type="Gene3D" id="1.20.1530.20">
    <property type="match status" value="1"/>
</dbReference>
<dbReference type="Gene3D" id="3.40.50.720">
    <property type="entry name" value="NAD(P)-binding Rossmann-like Domain"/>
    <property type="match status" value="1"/>
</dbReference>
<dbReference type="HAMAP" id="MF_01413">
    <property type="entry name" value="K_H_efflux_KefC"/>
    <property type="match status" value="1"/>
</dbReference>
<dbReference type="InterPro" id="IPR006153">
    <property type="entry name" value="Cation/H_exchanger_TM"/>
</dbReference>
<dbReference type="InterPro" id="IPR004771">
    <property type="entry name" value="K/H_exchanger"/>
</dbReference>
<dbReference type="InterPro" id="IPR023941">
    <property type="entry name" value="K_H_efflux_KefC"/>
</dbReference>
<dbReference type="InterPro" id="IPR006036">
    <property type="entry name" value="K_uptake_TrkA"/>
</dbReference>
<dbReference type="InterPro" id="IPR038770">
    <property type="entry name" value="Na+/solute_symporter_sf"/>
</dbReference>
<dbReference type="InterPro" id="IPR036291">
    <property type="entry name" value="NAD(P)-bd_dom_sf"/>
</dbReference>
<dbReference type="InterPro" id="IPR003148">
    <property type="entry name" value="RCK_N"/>
</dbReference>
<dbReference type="NCBIfam" id="TIGR00932">
    <property type="entry name" value="2a37"/>
    <property type="match status" value="1"/>
</dbReference>
<dbReference type="NCBIfam" id="NF002924">
    <property type="entry name" value="PRK03562.1"/>
    <property type="match status" value="1"/>
</dbReference>
<dbReference type="PANTHER" id="PTHR46157:SF3">
    <property type="entry name" value="GLUTATHIONE-REGULATED POTASSIUM-EFFLUX SYSTEM PROTEIN KEFC"/>
    <property type="match status" value="1"/>
</dbReference>
<dbReference type="PANTHER" id="PTHR46157">
    <property type="entry name" value="K(+) EFFLUX ANTIPORTER 3, CHLOROPLASTIC"/>
    <property type="match status" value="1"/>
</dbReference>
<dbReference type="Pfam" id="PF00999">
    <property type="entry name" value="Na_H_Exchanger"/>
    <property type="match status" value="1"/>
</dbReference>
<dbReference type="Pfam" id="PF02254">
    <property type="entry name" value="TrkA_N"/>
    <property type="match status" value="1"/>
</dbReference>
<dbReference type="PRINTS" id="PR00335">
    <property type="entry name" value="KUPTAKETRKA"/>
</dbReference>
<dbReference type="SUPFAM" id="SSF51735">
    <property type="entry name" value="NAD(P)-binding Rossmann-fold domains"/>
    <property type="match status" value="1"/>
</dbReference>
<dbReference type="PROSITE" id="PS51201">
    <property type="entry name" value="RCK_N"/>
    <property type="match status" value="1"/>
</dbReference>
<reference key="1">
    <citation type="journal article" date="2008" name="J. Bacteriol.">
        <title>The pangenome structure of Escherichia coli: comparative genomic analysis of E. coli commensal and pathogenic isolates.</title>
        <authorList>
            <person name="Rasko D.A."/>
            <person name="Rosovitz M.J."/>
            <person name="Myers G.S.A."/>
            <person name="Mongodin E.F."/>
            <person name="Fricke W.F."/>
            <person name="Gajer P."/>
            <person name="Crabtree J."/>
            <person name="Sebaihia M."/>
            <person name="Thomson N.R."/>
            <person name="Chaudhuri R."/>
            <person name="Henderson I.R."/>
            <person name="Sperandio V."/>
            <person name="Ravel J."/>
        </authorList>
    </citation>
    <scope>NUCLEOTIDE SEQUENCE [LARGE SCALE GENOMIC DNA]</scope>
    <source>
        <strain>HS</strain>
    </source>
</reference>
<name>KEFC_ECOHS</name>
<accession>A7ZVZ9</accession>
<keyword id="KW-0050">Antiport</keyword>
<keyword id="KW-0997">Cell inner membrane</keyword>
<keyword id="KW-1003">Cell membrane</keyword>
<keyword id="KW-0406">Ion transport</keyword>
<keyword id="KW-0472">Membrane</keyword>
<keyword id="KW-0630">Potassium</keyword>
<keyword id="KW-0633">Potassium transport</keyword>
<keyword id="KW-0812">Transmembrane</keyword>
<keyword id="KW-1133">Transmembrane helix</keyword>
<keyword id="KW-0813">Transport</keyword>
<protein>
    <recommendedName>
        <fullName evidence="1">Glutathione-regulated potassium-efflux system protein KefC</fullName>
    </recommendedName>
    <alternativeName>
        <fullName evidence="1">K(+)/H(+) antiporter</fullName>
    </alternativeName>
</protein>
<organism>
    <name type="scientific">Escherichia coli O9:H4 (strain HS)</name>
    <dbReference type="NCBI Taxonomy" id="331112"/>
    <lineage>
        <taxon>Bacteria</taxon>
        <taxon>Pseudomonadati</taxon>
        <taxon>Pseudomonadota</taxon>
        <taxon>Gammaproteobacteria</taxon>
        <taxon>Enterobacterales</taxon>
        <taxon>Enterobacteriaceae</taxon>
        <taxon>Escherichia</taxon>
    </lineage>
</organism>